<reference key="1">
    <citation type="journal article" date="2011" name="J. Bacteriol.">
        <title>Genome of Ochrobactrum anthropi ATCC 49188 T, a versatile opportunistic pathogen and symbiont of several eukaryotic hosts.</title>
        <authorList>
            <person name="Chain P.S."/>
            <person name="Lang D.M."/>
            <person name="Comerci D.J."/>
            <person name="Malfatti S.A."/>
            <person name="Vergez L.M."/>
            <person name="Shin M."/>
            <person name="Ugalde R.A."/>
            <person name="Garcia E."/>
            <person name="Tolmasky M.E."/>
        </authorList>
    </citation>
    <scope>NUCLEOTIDE SEQUENCE [LARGE SCALE GENOMIC DNA]</scope>
    <source>
        <strain>ATCC 49188 / DSM 6882 / CCUG 24695 / JCM 21032 / LMG 3331 / NBRC 15819 / NCTC 12168 / Alc 37</strain>
    </source>
</reference>
<name>RS4_BRUA4</name>
<protein>
    <recommendedName>
        <fullName evidence="1">Small ribosomal subunit protein uS4</fullName>
    </recommendedName>
    <alternativeName>
        <fullName evidence="3">30S ribosomal protein S4</fullName>
    </alternativeName>
</protein>
<proteinExistence type="inferred from homology"/>
<comment type="function">
    <text evidence="1">One of the primary rRNA binding proteins, it binds directly to 16S rRNA where it nucleates assembly of the body of the 30S subunit.</text>
</comment>
<comment type="function">
    <text evidence="1">With S5 and S12 plays an important role in translational accuracy.</text>
</comment>
<comment type="subunit">
    <text evidence="1">Part of the 30S ribosomal subunit. Contacts protein S5. The interaction surface between S4 and S5 is involved in control of translational fidelity.</text>
</comment>
<comment type="similarity">
    <text evidence="1">Belongs to the universal ribosomal protein uS4 family.</text>
</comment>
<accession>A6X1K6</accession>
<dbReference type="EMBL" id="CP000758">
    <property type="protein sequence ID" value="ABS15110.1"/>
    <property type="molecule type" value="Genomic_DNA"/>
</dbReference>
<dbReference type="RefSeq" id="WP_010661196.1">
    <property type="nucleotide sequence ID" value="NC_009667.1"/>
</dbReference>
<dbReference type="SMR" id="A6X1K6"/>
<dbReference type="STRING" id="439375.Oant_2396"/>
<dbReference type="GeneID" id="61317153"/>
<dbReference type="KEGG" id="oan:Oant_2396"/>
<dbReference type="eggNOG" id="COG0522">
    <property type="taxonomic scope" value="Bacteria"/>
</dbReference>
<dbReference type="HOGENOM" id="CLU_092403_0_0_5"/>
<dbReference type="PhylomeDB" id="A6X1K6"/>
<dbReference type="Proteomes" id="UP000002301">
    <property type="component" value="Chromosome 1"/>
</dbReference>
<dbReference type="GO" id="GO:0015935">
    <property type="term" value="C:small ribosomal subunit"/>
    <property type="evidence" value="ECO:0007669"/>
    <property type="project" value="InterPro"/>
</dbReference>
<dbReference type="GO" id="GO:0019843">
    <property type="term" value="F:rRNA binding"/>
    <property type="evidence" value="ECO:0007669"/>
    <property type="project" value="UniProtKB-UniRule"/>
</dbReference>
<dbReference type="GO" id="GO:0003735">
    <property type="term" value="F:structural constituent of ribosome"/>
    <property type="evidence" value="ECO:0007669"/>
    <property type="project" value="InterPro"/>
</dbReference>
<dbReference type="GO" id="GO:0042274">
    <property type="term" value="P:ribosomal small subunit biogenesis"/>
    <property type="evidence" value="ECO:0007669"/>
    <property type="project" value="TreeGrafter"/>
</dbReference>
<dbReference type="GO" id="GO:0006412">
    <property type="term" value="P:translation"/>
    <property type="evidence" value="ECO:0007669"/>
    <property type="project" value="UniProtKB-UniRule"/>
</dbReference>
<dbReference type="CDD" id="cd00165">
    <property type="entry name" value="S4"/>
    <property type="match status" value="1"/>
</dbReference>
<dbReference type="FunFam" id="3.10.290.10:FF:000001">
    <property type="entry name" value="30S ribosomal protein S4"/>
    <property type="match status" value="1"/>
</dbReference>
<dbReference type="Gene3D" id="1.10.1050.10">
    <property type="entry name" value="Ribosomal Protein S4 Delta 41, Chain A, domain 1"/>
    <property type="match status" value="1"/>
</dbReference>
<dbReference type="Gene3D" id="3.10.290.10">
    <property type="entry name" value="RNA-binding S4 domain"/>
    <property type="match status" value="1"/>
</dbReference>
<dbReference type="HAMAP" id="MF_01306_B">
    <property type="entry name" value="Ribosomal_uS4_B"/>
    <property type="match status" value="1"/>
</dbReference>
<dbReference type="InterPro" id="IPR022801">
    <property type="entry name" value="Ribosomal_uS4"/>
</dbReference>
<dbReference type="InterPro" id="IPR005709">
    <property type="entry name" value="Ribosomal_uS4_bac-type"/>
</dbReference>
<dbReference type="InterPro" id="IPR018079">
    <property type="entry name" value="Ribosomal_uS4_CS"/>
</dbReference>
<dbReference type="InterPro" id="IPR001912">
    <property type="entry name" value="Ribosomal_uS4_N"/>
</dbReference>
<dbReference type="InterPro" id="IPR002942">
    <property type="entry name" value="S4_RNA-bd"/>
</dbReference>
<dbReference type="InterPro" id="IPR036986">
    <property type="entry name" value="S4_RNA-bd_sf"/>
</dbReference>
<dbReference type="NCBIfam" id="NF003717">
    <property type="entry name" value="PRK05327.1"/>
    <property type="match status" value="1"/>
</dbReference>
<dbReference type="NCBIfam" id="TIGR01017">
    <property type="entry name" value="rpsD_bact"/>
    <property type="match status" value="1"/>
</dbReference>
<dbReference type="PANTHER" id="PTHR11831">
    <property type="entry name" value="30S 40S RIBOSOMAL PROTEIN"/>
    <property type="match status" value="1"/>
</dbReference>
<dbReference type="PANTHER" id="PTHR11831:SF4">
    <property type="entry name" value="SMALL RIBOSOMAL SUBUNIT PROTEIN US4M"/>
    <property type="match status" value="1"/>
</dbReference>
<dbReference type="Pfam" id="PF00163">
    <property type="entry name" value="Ribosomal_S4"/>
    <property type="match status" value="1"/>
</dbReference>
<dbReference type="Pfam" id="PF01479">
    <property type="entry name" value="S4"/>
    <property type="match status" value="1"/>
</dbReference>
<dbReference type="SMART" id="SM01390">
    <property type="entry name" value="Ribosomal_S4"/>
    <property type="match status" value="1"/>
</dbReference>
<dbReference type="SMART" id="SM00363">
    <property type="entry name" value="S4"/>
    <property type="match status" value="1"/>
</dbReference>
<dbReference type="SUPFAM" id="SSF55174">
    <property type="entry name" value="Alpha-L RNA-binding motif"/>
    <property type="match status" value="1"/>
</dbReference>
<dbReference type="PROSITE" id="PS00632">
    <property type="entry name" value="RIBOSOMAL_S4"/>
    <property type="match status" value="1"/>
</dbReference>
<dbReference type="PROSITE" id="PS50889">
    <property type="entry name" value="S4"/>
    <property type="match status" value="1"/>
</dbReference>
<gene>
    <name evidence="1" type="primary">rpsD</name>
    <name type="ordered locus">Oant_2396</name>
</gene>
<keyword id="KW-1185">Reference proteome</keyword>
<keyword id="KW-0687">Ribonucleoprotein</keyword>
<keyword id="KW-0689">Ribosomal protein</keyword>
<keyword id="KW-0694">RNA-binding</keyword>
<keyword id="KW-0699">rRNA-binding</keyword>
<evidence type="ECO:0000255" key="1">
    <source>
        <dbReference type="HAMAP-Rule" id="MF_01306"/>
    </source>
</evidence>
<evidence type="ECO:0000256" key="2">
    <source>
        <dbReference type="SAM" id="MobiDB-lite"/>
    </source>
</evidence>
<evidence type="ECO:0000305" key="3"/>
<feature type="chain" id="PRO_0000322314" description="Small ribosomal subunit protein uS4">
    <location>
        <begin position="1"/>
        <end position="205"/>
    </location>
</feature>
<feature type="domain" description="S4 RNA-binding" evidence="1">
    <location>
        <begin position="94"/>
        <end position="157"/>
    </location>
</feature>
<feature type="region of interest" description="Disordered" evidence="2">
    <location>
        <begin position="19"/>
        <end position="45"/>
    </location>
</feature>
<sequence>MSKRESAKYKIDRRLGENIWGRPKSPVNRREYGPGQHGQRRKGKLSDFGVQLRAKQKLKGFYGDISEKQFRKTYEEAARRKGDTGENLIGLLESRLDAVVYRAKFVPTIFAARQFINHGHVNVNGRRVNVQSYRLKTGDVVEVREKSKQLVIVLEAVQLAERDVPDYIEVDHNKLVATYSRVPTLTDVPYAVQMEPNLVVEFYSR</sequence>
<organism>
    <name type="scientific">Brucella anthropi (strain ATCC 49188 / DSM 6882 / CCUG 24695 / JCM 21032 / LMG 3331 / NBRC 15819 / NCTC 12168 / Alc 37)</name>
    <name type="common">Ochrobactrum anthropi</name>
    <dbReference type="NCBI Taxonomy" id="439375"/>
    <lineage>
        <taxon>Bacteria</taxon>
        <taxon>Pseudomonadati</taxon>
        <taxon>Pseudomonadota</taxon>
        <taxon>Alphaproteobacteria</taxon>
        <taxon>Hyphomicrobiales</taxon>
        <taxon>Brucellaceae</taxon>
        <taxon>Brucella/Ochrobactrum group</taxon>
        <taxon>Brucella</taxon>
    </lineage>
</organism>